<feature type="chain" id="PRO_1000139242" description="Cyclic pyranopterin monophosphate synthase">
    <location>
        <begin position="1"/>
        <end position="161"/>
    </location>
</feature>
<feature type="active site" evidence="1">
    <location>
        <position position="130"/>
    </location>
</feature>
<feature type="binding site" evidence="1">
    <location>
        <begin position="75"/>
        <end position="77"/>
    </location>
    <ligand>
        <name>substrate</name>
    </ligand>
</feature>
<feature type="binding site" evidence="1">
    <location>
        <begin position="115"/>
        <end position="116"/>
    </location>
    <ligand>
        <name>substrate</name>
    </ligand>
</feature>
<comment type="function">
    <text evidence="1">Catalyzes the conversion of (8S)-3',8-cyclo-7,8-dihydroguanosine 5'-triphosphate to cyclic pyranopterin monophosphate (cPMP).</text>
</comment>
<comment type="catalytic activity">
    <reaction evidence="1">
        <text>(8S)-3',8-cyclo-7,8-dihydroguanosine 5'-triphosphate = cyclic pyranopterin phosphate + diphosphate</text>
        <dbReference type="Rhea" id="RHEA:49580"/>
        <dbReference type="ChEBI" id="CHEBI:33019"/>
        <dbReference type="ChEBI" id="CHEBI:59648"/>
        <dbReference type="ChEBI" id="CHEBI:131766"/>
        <dbReference type="EC" id="4.6.1.17"/>
    </reaction>
</comment>
<comment type="pathway">
    <text evidence="1">Cofactor biosynthesis; molybdopterin biosynthesis.</text>
</comment>
<comment type="subunit">
    <text evidence="1">Homohexamer; trimer of dimers.</text>
</comment>
<comment type="similarity">
    <text evidence="1">Belongs to the MoaC family.</text>
</comment>
<name>MOAC_BACC0</name>
<dbReference type="EC" id="4.6.1.17" evidence="1"/>
<dbReference type="EMBL" id="CP001283">
    <property type="protein sequence ID" value="ACK92317.1"/>
    <property type="molecule type" value="Genomic_DNA"/>
</dbReference>
<dbReference type="RefSeq" id="WP_000094141.1">
    <property type="nucleotide sequence ID" value="NC_011773.1"/>
</dbReference>
<dbReference type="SMR" id="B7JSY7"/>
<dbReference type="GeneID" id="45024593"/>
<dbReference type="KEGG" id="bcu:BCAH820_4841"/>
<dbReference type="HOGENOM" id="CLU_074693_1_1_9"/>
<dbReference type="UniPathway" id="UPA00344"/>
<dbReference type="Proteomes" id="UP000001363">
    <property type="component" value="Chromosome"/>
</dbReference>
<dbReference type="GO" id="GO:0061799">
    <property type="term" value="F:cyclic pyranopterin monophosphate synthase activity"/>
    <property type="evidence" value="ECO:0007669"/>
    <property type="project" value="UniProtKB-UniRule"/>
</dbReference>
<dbReference type="GO" id="GO:0006777">
    <property type="term" value="P:Mo-molybdopterin cofactor biosynthetic process"/>
    <property type="evidence" value="ECO:0007669"/>
    <property type="project" value="UniProtKB-UniRule"/>
</dbReference>
<dbReference type="CDD" id="cd01420">
    <property type="entry name" value="MoaC_PE"/>
    <property type="match status" value="1"/>
</dbReference>
<dbReference type="Gene3D" id="3.30.70.640">
    <property type="entry name" value="Molybdopterin cofactor biosynthesis C (MoaC) domain"/>
    <property type="match status" value="1"/>
</dbReference>
<dbReference type="HAMAP" id="MF_01224_B">
    <property type="entry name" value="MoaC_B"/>
    <property type="match status" value="1"/>
</dbReference>
<dbReference type="InterPro" id="IPR023045">
    <property type="entry name" value="MoaC"/>
</dbReference>
<dbReference type="InterPro" id="IPR047594">
    <property type="entry name" value="MoaC_bact/euk"/>
</dbReference>
<dbReference type="InterPro" id="IPR036522">
    <property type="entry name" value="MoaC_sf"/>
</dbReference>
<dbReference type="InterPro" id="IPR050105">
    <property type="entry name" value="MoCo_biosynth_MoaA/MoaC"/>
</dbReference>
<dbReference type="InterPro" id="IPR002820">
    <property type="entry name" value="Mopterin_CF_biosynth-C_dom"/>
</dbReference>
<dbReference type="NCBIfam" id="TIGR00581">
    <property type="entry name" value="moaC"/>
    <property type="match status" value="1"/>
</dbReference>
<dbReference type="NCBIfam" id="NF006870">
    <property type="entry name" value="PRK09364.1"/>
    <property type="match status" value="1"/>
</dbReference>
<dbReference type="PANTHER" id="PTHR22960:SF29">
    <property type="entry name" value="CYCLIC PYRANOPTERIN MONOPHOSPHATE SYNTHASE"/>
    <property type="match status" value="1"/>
</dbReference>
<dbReference type="PANTHER" id="PTHR22960">
    <property type="entry name" value="MOLYBDOPTERIN COFACTOR SYNTHESIS PROTEIN A"/>
    <property type="match status" value="1"/>
</dbReference>
<dbReference type="Pfam" id="PF01967">
    <property type="entry name" value="MoaC"/>
    <property type="match status" value="1"/>
</dbReference>
<dbReference type="SUPFAM" id="SSF55040">
    <property type="entry name" value="Molybdenum cofactor biosynthesis protein C, MoaC"/>
    <property type="match status" value="1"/>
</dbReference>
<organism>
    <name type="scientific">Bacillus cereus (strain AH820)</name>
    <dbReference type="NCBI Taxonomy" id="405535"/>
    <lineage>
        <taxon>Bacteria</taxon>
        <taxon>Bacillati</taxon>
        <taxon>Bacillota</taxon>
        <taxon>Bacilli</taxon>
        <taxon>Bacillales</taxon>
        <taxon>Bacillaceae</taxon>
        <taxon>Bacillus</taxon>
        <taxon>Bacillus cereus group</taxon>
    </lineage>
</organism>
<proteinExistence type="inferred from homology"/>
<evidence type="ECO:0000255" key="1">
    <source>
        <dbReference type="HAMAP-Rule" id="MF_01224"/>
    </source>
</evidence>
<sequence>MSSFTHFNDQGRAKMVDISDKKATVRTAIACSSIVVTKEIYDKISHNEIGKGDVLAVAQIAGIMAAKRTSDIIPMCHPLLLKGVDVSFDWKQSDEQYRLLIEVKVKTEGSTGVEMEALTAASATALTVYDMCKAVDKGMIIGETYLLEKTGGKSGDYTRKS</sequence>
<accession>B7JSY7</accession>
<protein>
    <recommendedName>
        <fullName evidence="1">Cyclic pyranopterin monophosphate synthase</fullName>
        <ecNumber evidence="1">4.6.1.17</ecNumber>
    </recommendedName>
    <alternativeName>
        <fullName evidence="1">Molybdenum cofactor biosynthesis protein C</fullName>
    </alternativeName>
</protein>
<gene>
    <name evidence="1" type="primary">moaC</name>
    <name type="ordered locus">BCAH820_4841</name>
</gene>
<keyword id="KW-0456">Lyase</keyword>
<keyword id="KW-0501">Molybdenum cofactor biosynthesis</keyword>
<reference key="1">
    <citation type="submission" date="2008-10" db="EMBL/GenBank/DDBJ databases">
        <title>Genome sequence of Bacillus cereus AH820.</title>
        <authorList>
            <person name="Dodson R.J."/>
            <person name="Durkin A.S."/>
            <person name="Rosovitz M.J."/>
            <person name="Rasko D.A."/>
            <person name="Hoffmaster A."/>
            <person name="Ravel J."/>
            <person name="Sutton G."/>
        </authorList>
    </citation>
    <scope>NUCLEOTIDE SEQUENCE [LARGE SCALE GENOMIC DNA]</scope>
    <source>
        <strain>AH820</strain>
    </source>
</reference>